<keyword id="KW-0002">3D-structure</keyword>
<keyword id="KW-0025">Alternative splicing</keyword>
<keyword id="KW-0456">Lyase</keyword>
<keyword id="KW-0496">Mitochondrion</keyword>
<keyword id="KW-1267">Proteomics identification</keyword>
<keyword id="KW-0663">Pyridoxal phosphate</keyword>
<keyword id="KW-1185">Reference proteome</keyword>
<proteinExistence type="evidence at protein level"/>
<name>AT2L1_HUMAN</name>
<evidence type="ECO:0000250" key="1"/>
<evidence type="ECO:0000256" key="2">
    <source>
        <dbReference type="SAM" id="MobiDB-lite"/>
    </source>
</evidence>
<evidence type="ECO:0000269" key="3">
    <source>
    </source>
</evidence>
<evidence type="ECO:0000303" key="4">
    <source>
    </source>
</evidence>
<evidence type="ECO:0000303" key="5">
    <source>
    </source>
</evidence>
<evidence type="ECO:0000305" key="6"/>
<evidence type="ECO:0000305" key="7">
    <source>
    </source>
</evidence>
<evidence type="ECO:0007829" key="8">
    <source>
        <dbReference type="PDB" id="6TOR"/>
    </source>
</evidence>
<feature type="chain" id="PRO_0000287663" description="Ethanolamine-phosphate phospho-lyase">
    <location>
        <begin position="1"/>
        <end position="499"/>
    </location>
</feature>
<feature type="region of interest" description="Disordered" evidence="2">
    <location>
        <begin position="468"/>
        <end position="499"/>
    </location>
</feature>
<feature type="compositionally biased region" description="Basic and acidic residues" evidence="2">
    <location>
        <begin position="468"/>
        <end position="479"/>
    </location>
</feature>
<feature type="modified residue" description="N6-(pyridoxal phosphate)lysine" evidence="1">
    <location>
        <position position="278"/>
    </location>
</feature>
<feature type="splice variant" id="VSP_046097" description="In isoform 3." evidence="4">
    <original>MCELYSKRDTLGLRKKHIGPSCKVFFASDPIKIVRAQRQYMFDENGEQYLDCINNVAHV</original>
    <variation>M</variation>
    <location>
        <begin position="1"/>
        <end position="59"/>
    </location>
</feature>
<feature type="splice variant" id="VSP_025583" description="In isoform 2." evidence="5">
    <location>
        <begin position="59"/>
        <end position="64"/>
    </location>
</feature>
<feature type="sequence variant" id="VAR_032342" description="In dbSNP:rs1377210.">
    <original>S</original>
    <variation>P</variation>
    <location>
        <position position="185"/>
    </location>
</feature>
<feature type="sequence conflict" description="In Ref. 2; BAH11666." evidence="6" ref="2">
    <original>V</original>
    <variation>A</variation>
    <location>
        <position position="105"/>
    </location>
</feature>
<feature type="strand" evidence="8">
    <location>
        <begin position="33"/>
        <end position="38"/>
    </location>
</feature>
<feature type="strand" evidence="8">
    <location>
        <begin position="40"/>
        <end position="43"/>
    </location>
</feature>
<feature type="strand" evidence="8">
    <location>
        <begin position="48"/>
        <end position="53"/>
    </location>
</feature>
<feature type="helix" evidence="8">
    <location>
        <begin position="64"/>
        <end position="74"/>
    </location>
</feature>
<feature type="strand" evidence="8">
    <location>
        <begin position="81"/>
        <end position="83"/>
    </location>
</feature>
<feature type="helix" evidence="8">
    <location>
        <begin position="86"/>
        <end position="97"/>
    </location>
</feature>
<feature type="strand" evidence="8">
    <location>
        <begin position="105"/>
        <end position="111"/>
    </location>
</feature>
<feature type="helix" evidence="8">
    <location>
        <begin position="112"/>
        <end position="127"/>
    </location>
</feature>
<feature type="strand" evidence="8">
    <location>
        <begin position="131"/>
        <end position="135"/>
    </location>
</feature>
<feature type="helix" evidence="8">
    <location>
        <begin position="144"/>
        <end position="147"/>
    </location>
</feature>
<feature type="helix" evidence="8">
    <location>
        <begin position="151"/>
        <end position="153"/>
    </location>
</feature>
<feature type="strand" evidence="8">
    <location>
        <begin position="165"/>
        <end position="168"/>
    </location>
</feature>
<feature type="turn" evidence="8">
    <location>
        <begin position="173"/>
        <end position="175"/>
    </location>
</feature>
<feature type="strand" evidence="8">
    <location>
        <begin position="176"/>
        <end position="178"/>
    </location>
</feature>
<feature type="helix" evidence="8">
    <location>
        <begin position="185"/>
        <end position="202"/>
    </location>
</feature>
<feature type="strand" evidence="8">
    <location>
        <begin position="207"/>
        <end position="216"/>
    </location>
</feature>
<feature type="turn" evidence="8">
    <location>
        <begin position="217"/>
        <end position="220"/>
    </location>
</feature>
<feature type="helix" evidence="8">
    <location>
        <begin position="228"/>
        <end position="238"/>
    </location>
</feature>
<feature type="strand" evidence="8">
    <location>
        <begin position="242"/>
        <end position="246"/>
    </location>
</feature>
<feature type="turn" evidence="8">
    <location>
        <begin position="248"/>
        <end position="250"/>
    </location>
</feature>
<feature type="turn" evidence="8">
    <location>
        <begin position="252"/>
        <end position="255"/>
    </location>
</feature>
<feature type="helix" evidence="8">
    <location>
        <begin position="261"/>
        <end position="265"/>
    </location>
</feature>
<feature type="strand" evidence="8">
    <location>
        <begin position="272"/>
        <end position="276"/>
    </location>
</feature>
<feature type="helix" evidence="8">
    <location>
        <begin position="278"/>
        <end position="281"/>
    </location>
</feature>
<feature type="strand" evidence="8">
    <location>
        <begin position="287"/>
        <end position="291"/>
    </location>
</feature>
<feature type="helix" evidence="8">
    <location>
        <begin position="293"/>
        <end position="300"/>
    </location>
</feature>
<feature type="helix" evidence="8">
    <location>
        <begin position="314"/>
        <end position="329"/>
    </location>
</feature>
<feature type="helix" evidence="8">
    <location>
        <begin position="332"/>
        <end position="353"/>
    </location>
</feature>
<feature type="strand" evidence="8">
    <location>
        <begin position="357"/>
        <end position="363"/>
    </location>
</feature>
<feature type="strand" evidence="8">
    <location>
        <begin position="366"/>
        <end position="373"/>
    </location>
</feature>
<feature type="turn" evidence="8">
    <location>
        <begin position="375"/>
        <end position="377"/>
    </location>
</feature>
<feature type="helix" evidence="8">
    <location>
        <begin position="382"/>
        <end position="394"/>
    </location>
</feature>
<feature type="strand" evidence="8">
    <location>
        <begin position="400"/>
        <end position="402"/>
    </location>
</feature>
<feature type="turn" evidence="8">
    <location>
        <begin position="403"/>
        <end position="406"/>
    </location>
</feature>
<feature type="strand" evidence="8">
    <location>
        <begin position="408"/>
        <end position="411"/>
    </location>
</feature>
<feature type="helix" evidence="8">
    <location>
        <begin position="419"/>
        <end position="440"/>
    </location>
</feature>
<reference key="1">
    <citation type="journal article" date="1995" name="J. Biochem.">
        <title>Molecular cloning and sequencing of a cDNA encoding alanine-glyoxylate aminotransferase 2 from rat kidney.</title>
        <authorList>
            <person name="Matsui-Lee I.S."/>
            <person name="Muragaki Y."/>
            <person name="Ideguchi T."/>
            <person name="Hase T."/>
            <person name="Tsuji M."/>
            <person name="Ooshima A."/>
            <person name="Okuno E."/>
            <person name="Kido R."/>
        </authorList>
    </citation>
    <scope>NUCLEOTIDE SEQUENCE [MRNA] (ISOFORM 2)</scope>
</reference>
<reference key="2">
    <citation type="journal article" date="2004" name="Nat. Genet.">
        <title>Complete sequencing and characterization of 21,243 full-length human cDNAs.</title>
        <authorList>
            <person name="Ota T."/>
            <person name="Suzuki Y."/>
            <person name="Nishikawa T."/>
            <person name="Otsuki T."/>
            <person name="Sugiyama T."/>
            <person name="Irie R."/>
            <person name="Wakamatsu A."/>
            <person name="Hayashi K."/>
            <person name="Sato H."/>
            <person name="Nagai K."/>
            <person name="Kimura K."/>
            <person name="Makita H."/>
            <person name="Sekine M."/>
            <person name="Obayashi M."/>
            <person name="Nishi T."/>
            <person name="Shibahara T."/>
            <person name="Tanaka T."/>
            <person name="Ishii S."/>
            <person name="Yamamoto J."/>
            <person name="Saito K."/>
            <person name="Kawai Y."/>
            <person name="Isono Y."/>
            <person name="Nakamura Y."/>
            <person name="Nagahari K."/>
            <person name="Murakami K."/>
            <person name="Yasuda T."/>
            <person name="Iwayanagi T."/>
            <person name="Wagatsuma M."/>
            <person name="Shiratori A."/>
            <person name="Sudo H."/>
            <person name="Hosoiri T."/>
            <person name="Kaku Y."/>
            <person name="Kodaira H."/>
            <person name="Kondo H."/>
            <person name="Sugawara M."/>
            <person name="Takahashi M."/>
            <person name="Kanda K."/>
            <person name="Yokoi T."/>
            <person name="Furuya T."/>
            <person name="Kikkawa E."/>
            <person name="Omura Y."/>
            <person name="Abe K."/>
            <person name="Kamihara K."/>
            <person name="Katsuta N."/>
            <person name="Sato K."/>
            <person name="Tanikawa M."/>
            <person name="Yamazaki M."/>
            <person name="Ninomiya K."/>
            <person name="Ishibashi T."/>
            <person name="Yamashita H."/>
            <person name="Murakawa K."/>
            <person name="Fujimori K."/>
            <person name="Tanai H."/>
            <person name="Kimata M."/>
            <person name="Watanabe M."/>
            <person name="Hiraoka S."/>
            <person name="Chiba Y."/>
            <person name="Ishida S."/>
            <person name="Ono Y."/>
            <person name="Takiguchi S."/>
            <person name="Watanabe S."/>
            <person name="Yosida M."/>
            <person name="Hotuta T."/>
            <person name="Kusano J."/>
            <person name="Kanehori K."/>
            <person name="Takahashi-Fujii A."/>
            <person name="Hara H."/>
            <person name="Tanase T.-O."/>
            <person name="Nomura Y."/>
            <person name="Togiya S."/>
            <person name="Komai F."/>
            <person name="Hara R."/>
            <person name="Takeuchi K."/>
            <person name="Arita M."/>
            <person name="Imose N."/>
            <person name="Musashino K."/>
            <person name="Yuuki H."/>
            <person name="Oshima A."/>
            <person name="Sasaki N."/>
            <person name="Aotsuka S."/>
            <person name="Yoshikawa Y."/>
            <person name="Matsunawa H."/>
            <person name="Ichihara T."/>
            <person name="Shiohata N."/>
            <person name="Sano S."/>
            <person name="Moriya S."/>
            <person name="Momiyama H."/>
            <person name="Satoh N."/>
            <person name="Takami S."/>
            <person name="Terashima Y."/>
            <person name="Suzuki O."/>
            <person name="Nakagawa S."/>
            <person name="Senoh A."/>
            <person name="Mizoguchi H."/>
            <person name="Goto Y."/>
            <person name="Shimizu F."/>
            <person name="Wakebe H."/>
            <person name="Hishigaki H."/>
            <person name="Watanabe T."/>
            <person name="Sugiyama A."/>
            <person name="Takemoto M."/>
            <person name="Kawakami B."/>
            <person name="Yamazaki M."/>
            <person name="Watanabe K."/>
            <person name="Kumagai A."/>
            <person name="Itakura S."/>
            <person name="Fukuzumi Y."/>
            <person name="Fujimori Y."/>
            <person name="Komiyama M."/>
            <person name="Tashiro H."/>
            <person name="Tanigami A."/>
            <person name="Fujiwara T."/>
            <person name="Ono T."/>
            <person name="Yamada K."/>
            <person name="Fujii Y."/>
            <person name="Ozaki K."/>
            <person name="Hirao M."/>
            <person name="Ohmori Y."/>
            <person name="Kawabata A."/>
            <person name="Hikiji T."/>
            <person name="Kobatake N."/>
            <person name="Inagaki H."/>
            <person name="Ikema Y."/>
            <person name="Okamoto S."/>
            <person name="Okitani R."/>
            <person name="Kawakami T."/>
            <person name="Noguchi S."/>
            <person name="Itoh T."/>
            <person name="Shigeta K."/>
            <person name="Senba T."/>
            <person name="Matsumura K."/>
            <person name="Nakajima Y."/>
            <person name="Mizuno T."/>
            <person name="Morinaga M."/>
            <person name="Sasaki M."/>
            <person name="Togashi T."/>
            <person name="Oyama M."/>
            <person name="Hata H."/>
            <person name="Watanabe M."/>
            <person name="Komatsu T."/>
            <person name="Mizushima-Sugano J."/>
            <person name="Satoh T."/>
            <person name="Shirai Y."/>
            <person name="Takahashi Y."/>
            <person name="Nakagawa K."/>
            <person name="Okumura K."/>
            <person name="Nagase T."/>
            <person name="Nomura N."/>
            <person name="Kikuchi H."/>
            <person name="Masuho Y."/>
            <person name="Yamashita R."/>
            <person name="Nakai K."/>
            <person name="Yada T."/>
            <person name="Nakamura Y."/>
            <person name="Ohara O."/>
            <person name="Isogai T."/>
            <person name="Sugano S."/>
        </authorList>
    </citation>
    <scope>NUCLEOTIDE SEQUENCE [LARGE SCALE MRNA] (ISOFORMS 1 AND 3)</scope>
    <source>
        <tissue>Brain cortex</tissue>
        <tissue>Kidney</tissue>
    </source>
</reference>
<reference key="3">
    <citation type="journal article" date="2005" name="Nature">
        <title>Generation and annotation of the DNA sequences of human chromosomes 2 and 4.</title>
        <authorList>
            <person name="Hillier L.W."/>
            <person name="Graves T.A."/>
            <person name="Fulton R.S."/>
            <person name="Fulton L.A."/>
            <person name="Pepin K.H."/>
            <person name="Minx P."/>
            <person name="Wagner-McPherson C."/>
            <person name="Layman D."/>
            <person name="Wylie K."/>
            <person name="Sekhon M."/>
            <person name="Becker M.C."/>
            <person name="Fewell G.A."/>
            <person name="Delehaunty K.D."/>
            <person name="Miner T.L."/>
            <person name="Nash W.E."/>
            <person name="Kremitzki C."/>
            <person name="Oddy L."/>
            <person name="Du H."/>
            <person name="Sun H."/>
            <person name="Bradshaw-Cordum H."/>
            <person name="Ali J."/>
            <person name="Carter J."/>
            <person name="Cordes M."/>
            <person name="Harris A."/>
            <person name="Isak A."/>
            <person name="van Brunt A."/>
            <person name="Nguyen C."/>
            <person name="Du F."/>
            <person name="Courtney L."/>
            <person name="Kalicki J."/>
            <person name="Ozersky P."/>
            <person name="Abbott S."/>
            <person name="Armstrong J."/>
            <person name="Belter E.A."/>
            <person name="Caruso L."/>
            <person name="Cedroni M."/>
            <person name="Cotton M."/>
            <person name="Davidson T."/>
            <person name="Desai A."/>
            <person name="Elliott G."/>
            <person name="Erb T."/>
            <person name="Fronick C."/>
            <person name="Gaige T."/>
            <person name="Haakenson W."/>
            <person name="Haglund K."/>
            <person name="Holmes A."/>
            <person name="Harkins R."/>
            <person name="Kim K."/>
            <person name="Kruchowski S.S."/>
            <person name="Strong C.M."/>
            <person name="Grewal N."/>
            <person name="Goyea E."/>
            <person name="Hou S."/>
            <person name="Levy A."/>
            <person name="Martinka S."/>
            <person name="Mead K."/>
            <person name="McLellan M.D."/>
            <person name="Meyer R."/>
            <person name="Randall-Maher J."/>
            <person name="Tomlinson C."/>
            <person name="Dauphin-Kohlberg S."/>
            <person name="Kozlowicz-Reilly A."/>
            <person name="Shah N."/>
            <person name="Swearengen-Shahid S."/>
            <person name="Snider J."/>
            <person name="Strong J.T."/>
            <person name="Thompson J."/>
            <person name="Yoakum M."/>
            <person name="Leonard S."/>
            <person name="Pearman C."/>
            <person name="Trani L."/>
            <person name="Radionenko M."/>
            <person name="Waligorski J.E."/>
            <person name="Wang C."/>
            <person name="Rock S.M."/>
            <person name="Tin-Wollam A.-M."/>
            <person name="Maupin R."/>
            <person name="Latreille P."/>
            <person name="Wendl M.C."/>
            <person name="Yang S.-P."/>
            <person name="Pohl C."/>
            <person name="Wallis J.W."/>
            <person name="Spieth J."/>
            <person name="Bieri T.A."/>
            <person name="Berkowicz N."/>
            <person name="Nelson J.O."/>
            <person name="Osborne J."/>
            <person name="Ding L."/>
            <person name="Meyer R."/>
            <person name="Sabo A."/>
            <person name="Shotland Y."/>
            <person name="Sinha P."/>
            <person name="Wohldmann P.E."/>
            <person name="Cook L.L."/>
            <person name="Hickenbotham M.T."/>
            <person name="Eldred J."/>
            <person name="Williams D."/>
            <person name="Jones T.A."/>
            <person name="She X."/>
            <person name="Ciccarelli F.D."/>
            <person name="Izaurralde E."/>
            <person name="Taylor J."/>
            <person name="Schmutz J."/>
            <person name="Myers R.M."/>
            <person name="Cox D.R."/>
            <person name="Huang X."/>
            <person name="McPherson J.D."/>
            <person name="Mardis E.R."/>
            <person name="Clifton S.W."/>
            <person name="Warren W.C."/>
            <person name="Chinwalla A.T."/>
            <person name="Eddy S.R."/>
            <person name="Marra M.A."/>
            <person name="Ovcharenko I."/>
            <person name="Furey T.S."/>
            <person name="Miller W."/>
            <person name="Eichler E.E."/>
            <person name="Bork P."/>
            <person name="Suyama M."/>
            <person name="Torrents D."/>
            <person name="Waterston R.H."/>
            <person name="Wilson R.K."/>
        </authorList>
    </citation>
    <scope>NUCLEOTIDE SEQUENCE [LARGE SCALE GENOMIC DNA]</scope>
</reference>
<reference key="4">
    <citation type="journal article" date="2004" name="Genome Res.">
        <title>The status, quality, and expansion of the NIH full-length cDNA project: the Mammalian Gene Collection (MGC).</title>
        <authorList>
            <consortium name="The MGC Project Team"/>
        </authorList>
    </citation>
    <scope>NUCLEOTIDE SEQUENCE [LARGE SCALE MRNA] (ISOFORM 1)</scope>
    <source>
        <tissue>Brain</tissue>
    </source>
</reference>
<reference key="5">
    <citation type="journal article" date="2012" name="J. Biol. Chem.">
        <title>Molecular identification of hydroxylysine kinase and of ammoniophospholyases acting on 5-phosphohydroxy-L-lysine and phosphoethanolamine.</title>
        <authorList>
            <person name="Veiga-da-Cunha M."/>
            <person name="Hadi F."/>
            <person name="Balligand T."/>
            <person name="Stroobant V."/>
            <person name="Van Schaftingen E."/>
        </authorList>
    </citation>
    <scope>FUNCTION</scope>
    <scope>CATALYTIC ACTIVITY</scope>
    <scope>COFACTOR</scope>
    <scope>BIOPHYSICOCHEMICAL PROPERTIES</scope>
</reference>
<gene>
    <name type="primary">ETNPPL</name>
    <name type="synonym">AGXT2L1</name>
</gene>
<organism>
    <name type="scientific">Homo sapiens</name>
    <name type="common">Human</name>
    <dbReference type="NCBI Taxonomy" id="9606"/>
    <lineage>
        <taxon>Eukaryota</taxon>
        <taxon>Metazoa</taxon>
        <taxon>Chordata</taxon>
        <taxon>Craniata</taxon>
        <taxon>Vertebrata</taxon>
        <taxon>Euteleostomi</taxon>
        <taxon>Mammalia</taxon>
        <taxon>Eutheria</taxon>
        <taxon>Euarchontoglires</taxon>
        <taxon>Primates</taxon>
        <taxon>Haplorrhini</taxon>
        <taxon>Catarrhini</taxon>
        <taxon>Hominidae</taxon>
        <taxon>Homo</taxon>
    </lineage>
</organism>
<dbReference type="EC" id="4.2.3.2" evidence="3"/>
<dbReference type="EMBL" id="AJ298293">
    <property type="protein sequence ID" value="CAC22253.1"/>
    <property type="molecule type" value="mRNA"/>
</dbReference>
<dbReference type="EMBL" id="AK091888">
    <property type="protein sequence ID" value="BAC03766.1"/>
    <property type="molecule type" value="mRNA"/>
</dbReference>
<dbReference type="EMBL" id="AK294072">
    <property type="protein sequence ID" value="BAH11666.1"/>
    <property type="molecule type" value="mRNA"/>
</dbReference>
<dbReference type="EMBL" id="AC097473">
    <property type="protein sequence ID" value="AAY40946.1"/>
    <property type="molecule type" value="Genomic_DNA"/>
</dbReference>
<dbReference type="EMBL" id="BC022526">
    <property type="protein sequence ID" value="AAH22526.1"/>
    <property type="molecule type" value="mRNA"/>
</dbReference>
<dbReference type="CCDS" id="CCDS3682.1">
    <molecule id="Q8TBG4-1"/>
</dbReference>
<dbReference type="CCDS" id="CCDS54792.1">
    <molecule id="Q8TBG4-3"/>
</dbReference>
<dbReference type="CCDS" id="CCDS54793.1">
    <molecule id="Q8TBG4-2"/>
</dbReference>
<dbReference type="RefSeq" id="NP_001140062.1">
    <molecule id="Q8TBG4-2"/>
    <property type="nucleotide sequence ID" value="NM_001146590.2"/>
</dbReference>
<dbReference type="RefSeq" id="NP_001140099.1">
    <molecule id="Q8TBG4-3"/>
    <property type="nucleotide sequence ID" value="NM_001146627.2"/>
</dbReference>
<dbReference type="RefSeq" id="NP_001317960.1">
    <property type="nucleotide sequence ID" value="NM_001331031.1"/>
</dbReference>
<dbReference type="RefSeq" id="NP_001317961.1">
    <property type="nucleotide sequence ID" value="NM_001331032.1"/>
</dbReference>
<dbReference type="RefSeq" id="NP_001317962.1">
    <property type="nucleotide sequence ID" value="NM_001331033.1"/>
</dbReference>
<dbReference type="RefSeq" id="NP_112569.2">
    <molecule id="Q8TBG4-1"/>
    <property type="nucleotide sequence ID" value="NM_031279.3"/>
</dbReference>
<dbReference type="PDB" id="6TOR">
    <property type="method" value="X-ray"/>
    <property type="resolution" value="2.05 A"/>
    <property type="chains" value="A/B=1-499"/>
</dbReference>
<dbReference type="PDBsum" id="6TOR"/>
<dbReference type="SMR" id="Q8TBG4"/>
<dbReference type="BioGRID" id="122323">
    <property type="interactions" value="6"/>
</dbReference>
<dbReference type="FunCoup" id="Q8TBG4">
    <property type="interactions" value="178"/>
</dbReference>
<dbReference type="IntAct" id="Q8TBG4">
    <property type="interactions" value="5"/>
</dbReference>
<dbReference type="STRING" id="9606.ENSP00000296486"/>
<dbReference type="GlyGen" id="Q8TBG4">
    <property type="glycosylation" value="2 sites, 1 O-linked glycan (1 site)"/>
</dbReference>
<dbReference type="iPTMnet" id="Q8TBG4"/>
<dbReference type="PhosphoSitePlus" id="Q8TBG4"/>
<dbReference type="BioMuta" id="ETNPPL"/>
<dbReference type="DMDM" id="74751376"/>
<dbReference type="jPOST" id="Q8TBG4"/>
<dbReference type="MassIVE" id="Q8TBG4"/>
<dbReference type="PaxDb" id="9606-ENSP00000296486"/>
<dbReference type="PeptideAtlas" id="Q8TBG4"/>
<dbReference type="ProteomicsDB" id="19316"/>
<dbReference type="ProteomicsDB" id="74014">
    <molecule id="Q8TBG4-1"/>
</dbReference>
<dbReference type="ProteomicsDB" id="74015">
    <molecule id="Q8TBG4-2"/>
</dbReference>
<dbReference type="Pumba" id="Q8TBG4"/>
<dbReference type="Antibodypedia" id="45175">
    <property type="antibodies" value="58 antibodies from 22 providers"/>
</dbReference>
<dbReference type="DNASU" id="64850"/>
<dbReference type="Ensembl" id="ENST00000296486.8">
    <molecule id="Q8TBG4-1"/>
    <property type="protein sequence ID" value="ENSP00000296486.3"/>
    <property type="gene ID" value="ENSG00000164089.9"/>
</dbReference>
<dbReference type="Ensembl" id="ENST00000411864.6">
    <molecule id="Q8TBG4-2"/>
    <property type="protein sequence ID" value="ENSP00000392269.2"/>
    <property type="gene ID" value="ENSG00000164089.9"/>
</dbReference>
<dbReference type="Ensembl" id="ENST00000512646.5">
    <molecule id="Q8TBG4-3"/>
    <property type="protein sequence ID" value="ENSP00000427065.1"/>
    <property type="gene ID" value="ENSG00000164089.9"/>
</dbReference>
<dbReference type="GeneID" id="64850"/>
<dbReference type="KEGG" id="hsa:64850"/>
<dbReference type="MANE-Select" id="ENST00000296486.8">
    <property type="protein sequence ID" value="ENSP00000296486.3"/>
    <property type="RefSeq nucleotide sequence ID" value="NM_031279.4"/>
    <property type="RefSeq protein sequence ID" value="NP_112569.2"/>
</dbReference>
<dbReference type="UCSC" id="uc003hzc.4">
    <molecule id="Q8TBG4-1"/>
    <property type="organism name" value="human"/>
</dbReference>
<dbReference type="AGR" id="HGNC:14404"/>
<dbReference type="CTD" id="64850"/>
<dbReference type="DisGeNET" id="64850"/>
<dbReference type="GeneCards" id="ETNPPL"/>
<dbReference type="HGNC" id="HGNC:14404">
    <property type="gene designation" value="ETNPPL"/>
</dbReference>
<dbReference type="HPA" id="ENSG00000164089">
    <property type="expression patterns" value="Group enriched (brain, liver)"/>
</dbReference>
<dbReference type="MIM" id="614682">
    <property type="type" value="gene"/>
</dbReference>
<dbReference type="neXtProt" id="NX_Q8TBG4"/>
<dbReference type="OpenTargets" id="ENSG00000164089"/>
<dbReference type="PharmGKB" id="PA24635"/>
<dbReference type="VEuPathDB" id="HostDB:ENSG00000164089"/>
<dbReference type="eggNOG" id="KOG1403">
    <property type="taxonomic scope" value="Eukaryota"/>
</dbReference>
<dbReference type="GeneTree" id="ENSGT00940000157910"/>
<dbReference type="InParanoid" id="Q8TBG4"/>
<dbReference type="OMA" id="GAIETMK"/>
<dbReference type="OrthoDB" id="10261433at2759"/>
<dbReference type="PAN-GO" id="Q8TBG4">
    <property type="GO annotations" value="1 GO annotation based on evolutionary models"/>
</dbReference>
<dbReference type="PhylomeDB" id="Q8TBG4"/>
<dbReference type="TreeFam" id="TF320468"/>
<dbReference type="PathwayCommons" id="Q8TBG4"/>
<dbReference type="Reactome" id="R-HSA-1483213">
    <property type="pathway name" value="Synthesis of PE"/>
</dbReference>
<dbReference type="SABIO-RK" id="Q8TBG4"/>
<dbReference type="SignaLink" id="Q8TBG4"/>
<dbReference type="BioGRID-ORCS" id="64850">
    <property type="hits" value="15 hits in 1105 CRISPR screens"/>
</dbReference>
<dbReference type="GenomeRNAi" id="64850"/>
<dbReference type="Pharos" id="Q8TBG4">
    <property type="development level" value="Tbio"/>
</dbReference>
<dbReference type="PRO" id="PR:Q8TBG4"/>
<dbReference type="Proteomes" id="UP000005640">
    <property type="component" value="Chromosome 4"/>
</dbReference>
<dbReference type="RNAct" id="Q8TBG4">
    <property type="molecule type" value="protein"/>
</dbReference>
<dbReference type="Bgee" id="ENSG00000164089">
    <property type="expression patterns" value="Expressed in cranial nerve II and 152 other cell types or tissues"/>
</dbReference>
<dbReference type="ExpressionAtlas" id="Q8TBG4">
    <property type="expression patterns" value="baseline and differential"/>
</dbReference>
<dbReference type="GO" id="GO:0016020">
    <property type="term" value="C:membrane"/>
    <property type="evidence" value="ECO:0007669"/>
    <property type="project" value="GOC"/>
</dbReference>
<dbReference type="GO" id="GO:0005759">
    <property type="term" value="C:mitochondrial matrix"/>
    <property type="evidence" value="ECO:0000304"/>
    <property type="project" value="Reactome"/>
</dbReference>
<dbReference type="GO" id="GO:0050459">
    <property type="term" value="F:ethanolamine-phosphate phospho-lyase activity"/>
    <property type="evidence" value="ECO:0000314"/>
    <property type="project" value="FlyBase"/>
</dbReference>
<dbReference type="GO" id="GO:0030170">
    <property type="term" value="F:pyridoxal phosphate binding"/>
    <property type="evidence" value="ECO:0007669"/>
    <property type="project" value="InterPro"/>
</dbReference>
<dbReference type="GO" id="GO:0008483">
    <property type="term" value="F:transaminase activity"/>
    <property type="evidence" value="ECO:0007669"/>
    <property type="project" value="InterPro"/>
</dbReference>
<dbReference type="GO" id="GO:0071385">
    <property type="term" value="P:cellular response to glucocorticoid stimulus"/>
    <property type="evidence" value="ECO:0007669"/>
    <property type="project" value="Ensembl"/>
</dbReference>
<dbReference type="GO" id="GO:1905372">
    <property type="term" value="P:ceramide phosphoethanolamine catabolic process"/>
    <property type="evidence" value="ECO:0007669"/>
    <property type="project" value="Ensembl"/>
</dbReference>
<dbReference type="GO" id="GO:0055088">
    <property type="term" value="P:lipid homeostasis"/>
    <property type="evidence" value="ECO:0007669"/>
    <property type="project" value="Ensembl"/>
</dbReference>
<dbReference type="GO" id="GO:0006649">
    <property type="term" value="P:phospholipid transfer to membrane"/>
    <property type="evidence" value="ECO:0007669"/>
    <property type="project" value="Ensembl"/>
</dbReference>
<dbReference type="GO" id="GO:0032094">
    <property type="term" value="P:response to food"/>
    <property type="evidence" value="ECO:0007669"/>
    <property type="project" value="Ensembl"/>
</dbReference>
<dbReference type="CDD" id="cd00610">
    <property type="entry name" value="OAT_like"/>
    <property type="match status" value="1"/>
</dbReference>
<dbReference type="FunFam" id="3.40.640.10:FF:000058">
    <property type="entry name" value="ethanolamine-phosphate phospho-lyase isoform X1"/>
    <property type="match status" value="1"/>
</dbReference>
<dbReference type="Gene3D" id="3.90.1150.10">
    <property type="entry name" value="Aspartate Aminotransferase, domain 1"/>
    <property type="match status" value="1"/>
</dbReference>
<dbReference type="Gene3D" id="3.40.640.10">
    <property type="entry name" value="Type I PLP-dependent aspartate aminotransferase-like (Major domain)"/>
    <property type="match status" value="1"/>
</dbReference>
<dbReference type="InterPro" id="IPR005814">
    <property type="entry name" value="Aminotrans_3"/>
</dbReference>
<dbReference type="InterPro" id="IPR049704">
    <property type="entry name" value="Aminotrans_3_PPA_site"/>
</dbReference>
<dbReference type="InterPro" id="IPR015424">
    <property type="entry name" value="PyrdxlP-dep_Trfase"/>
</dbReference>
<dbReference type="InterPro" id="IPR015421">
    <property type="entry name" value="PyrdxlP-dep_Trfase_major"/>
</dbReference>
<dbReference type="InterPro" id="IPR015422">
    <property type="entry name" value="PyrdxlP-dep_Trfase_small"/>
</dbReference>
<dbReference type="PANTHER" id="PTHR45688">
    <property type="match status" value="1"/>
</dbReference>
<dbReference type="PANTHER" id="PTHR45688:SF1">
    <property type="entry name" value="ETHANOLAMINE-PHOSPHATE PHOSPHO-LYASE"/>
    <property type="match status" value="1"/>
</dbReference>
<dbReference type="Pfam" id="PF00202">
    <property type="entry name" value="Aminotran_3"/>
    <property type="match status" value="1"/>
</dbReference>
<dbReference type="SUPFAM" id="SSF53383">
    <property type="entry name" value="PLP-dependent transferases"/>
    <property type="match status" value="1"/>
</dbReference>
<dbReference type="PROSITE" id="PS00600">
    <property type="entry name" value="AA_TRANSFER_CLASS_3"/>
    <property type="match status" value="1"/>
</dbReference>
<sequence length="499" mass="55671">MCELYSKRDTLGLRKKHIGPSCKVFFASDPIKIVRAQRQYMFDENGEQYLDCINNVAHVGHCHPGVVKAALKQMELLNTNSRFLHDNIVEYAKRLSATLPEKLSVCYFTNSGSEANDLALRLARQFRGHQDVITLDHAYHGHLSSLIEISPYKFQKGKDVKKEFVHVAPTPDTYRGKYREDHADSASAYADEVKKIIEDAHNSGRKIAAFIAESMQSCGGQIIPPAGYFQKVAEYVHGAGGVFIADEVQVGFGRVGKHFWSFQMYGEDFVPDIVTMGKPMGNGHPVACVVTTKEIAEAFSSSGMEYFNTYGGNPVSCAVGLAVLDIIENEDLQGNAKRVGNYLTELLKKQKAKHTLIGDIRGIGLFIGIDLVKDHLKRTPATAEAQHIIYKMKEKRVLLSADGPHRNVLKIKPPMCFTEEDAKFMVDQLDRILTVLEEAMGTKTESVTSENTPCKTKMLKEAHIELLRDSTTDSKENPSRKRNGMCTDTHSLLSKRLKT</sequence>
<comment type="function">
    <text evidence="3">Catalyzes the pyridoxal-phosphate-dependent breakdown of phosphoethanolamine, converting it to ammonia, inorganic phosphate and acetaldehyde.</text>
</comment>
<comment type="catalytic activity">
    <reaction evidence="3">
        <text>phosphoethanolamine + H2O = acetaldehyde + NH4(+) + phosphate</text>
        <dbReference type="Rhea" id="RHEA:17889"/>
        <dbReference type="ChEBI" id="CHEBI:15343"/>
        <dbReference type="ChEBI" id="CHEBI:15377"/>
        <dbReference type="ChEBI" id="CHEBI:28938"/>
        <dbReference type="ChEBI" id="CHEBI:43474"/>
        <dbReference type="ChEBI" id="CHEBI:58190"/>
        <dbReference type="EC" id="4.2.3.2"/>
    </reaction>
</comment>
<comment type="cofactor">
    <cofactor evidence="3">
        <name>pyridoxal 5'-phosphate</name>
        <dbReference type="ChEBI" id="CHEBI:597326"/>
    </cofactor>
</comment>
<comment type="biophysicochemical properties">
    <kinetics>
        <KM evidence="3">680 uM for phosphoethanolamine (at pH 7.4)</KM>
        <Vmax evidence="3">1.46 umol/min/mg enzyme (at pH 7.4)</Vmax>
    </kinetics>
</comment>
<comment type="subunit">
    <text evidence="1">Homotetramer.</text>
</comment>
<comment type="interaction">
    <interactant intactId="EBI-12585277">
        <id>Q8TBG4</id>
    </interactant>
    <interactant intactId="EBI-1053696">
        <id>Q86WB0</id>
        <label>ZC3HC1</label>
    </interactant>
    <organismsDiffer>false</organismsDiffer>
    <experiments>2</experiments>
</comment>
<comment type="subcellular location">
    <subcellularLocation>
        <location evidence="6">Mitochondrion</location>
    </subcellularLocation>
</comment>
<comment type="alternative products">
    <event type="alternative splicing"/>
    <isoform>
        <id>Q8TBG4-1</id>
        <name>1</name>
        <sequence type="displayed"/>
    </isoform>
    <isoform>
        <id>Q8TBG4-2</id>
        <name>2</name>
        <sequence type="described" ref="VSP_025583"/>
    </isoform>
    <isoform>
        <id>Q8TBG4-3</id>
        <name>3</name>
        <sequence type="described" ref="VSP_046097"/>
    </isoform>
</comment>
<comment type="similarity">
    <text evidence="6">Belongs to the class-III pyridoxal-phosphate-dependent aminotransferase family.</text>
</comment>
<comment type="caution">
    <text evidence="7">Does not seem to possess aminotransferase activity.</text>
</comment>
<protein>
    <recommendedName>
        <fullName>Ethanolamine-phosphate phospho-lyase</fullName>
        <ecNumber evidence="3">4.2.3.2</ecNumber>
    </recommendedName>
    <alternativeName>
        <fullName>Alanine--glyoxylate aminotransferase 2-like 1</fullName>
    </alternativeName>
</protein>
<accession>Q8TBG4</accession>
<accession>B7Z1Y0</accession>
<accession>E9PBY0</accession>
<accession>Q9H174</accession>